<comment type="function">
    <text evidence="1">One of the enzymes of the urea cycle, the metabolic pathway transforming neurotoxic amonia produced by protein catabolism into inocuous urea in the liver of ureotelic animals. Catalyzes the formation of arginosuccinate from aspartate, citrulline and ATP and together with ASL it is responsible for the biosynthesis of arginine in most body tissues.</text>
</comment>
<comment type="catalytic activity">
    <reaction evidence="1">
        <text>L-citrulline + L-aspartate + ATP = 2-(N(omega)-L-arginino)succinate + AMP + diphosphate + H(+)</text>
        <dbReference type="Rhea" id="RHEA:10932"/>
        <dbReference type="ChEBI" id="CHEBI:15378"/>
        <dbReference type="ChEBI" id="CHEBI:29991"/>
        <dbReference type="ChEBI" id="CHEBI:30616"/>
        <dbReference type="ChEBI" id="CHEBI:33019"/>
        <dbReference type="ChEBI" id="CHEBI:57472"/>
        <dbReference type="ChEBI" id="CHEBI:57743"/>
        <dbReference type="ChEBI" id="CHEBI:456215"/>
        <dbReference type="EC" id="6.3.4.5"/>
    </reaction>
</comment>
<comment type="pathway">
    <text evidence="1">Amino-acid biosynthesis; L-arginine biosynthesis; L-arginine from L-ornithine and carbamoyl phosphate: step 2/3.</text>
</comment>
<comment type="pathway">
    <text evidence="1">Nitrogen metabolism; urea cycle; (N(omega)-L-arginino)succinate from L-aspartate and L-citrulline: step 1/1.</text>
</comment>
<comment type="subunit">
    <text evidence="1">Homotetramer.</text>
</comment>
<comment type="subcellular location">
    <subcellularLocation>
        <location evidence="1">Cytoplasm</location>
        <location evidence="1">Cytosol</location>
    </subcellularLocation>
</comment>
<comment type="similarity">
    <text evidence="3">Belongs to the argininosuccinate synthase family.</text>
</comment>
<reference key="1">
    <citation type="journal article" date="2005" name="Genome Biol.">
        <title>Full-length cDNAs from chicken bursal lymphocytes to facilitate gene function analysis.</title>
        <authorList>
            <person name="Caldwell R.B."/>
            <person name="Kierzek A.M."/>
            <person name="Arakawa H."/>
            <person name="Bezzubov Y."/>
            <person name="Zaim J."/>
            <person name="Fiedler P."/>
            <person name="Kutter S."/>
            <person name="Blagodatski A."/>
            <person name="Kostovska D."/>
            <person name="Koter M."/>
            <person name="Plachy J."/>
            <person name="Carninci P."/>
            <person name="Hayashizaki Y."/>
            <person name="Buerstedde J.-M."/>
        </authorList>
    </citation>
    <scope>NUCLEOTIDE SEQUENCE [LARGE SCALE MRNA]</scope>
    <source>
        <strain>CB</strain>
        <tissue>Bursa of Fabricius</tissue>
    </source>
</reference>
<evidence type="ECO:0000250" key="1">
    <source>
        <dbReference type="UniProtKB" id="P00966"/>
    </source>
</evidence>
<evidence type="ECO:0000250" key="2">
    <source>
        <dbReference type="UniProtKB" id="P09034"/>
    </source>
</evidence>
<evidence type="ECO:0000305" key="3"/>
<evidence type="ECO:0000312" key="4">
    <source>
        <dbReference type="EMBL" id="CAG32270.1"/>
    </source>
</evidence>
<feature type="chain" id="PRO_0000321322" description="Argininosuccinate synthase">
    <location>
        <begin position="1"/>
        <end position="416"/>
    </location>
</feature>
<feature type="binding site" evidence="1">
    <location>
        <begin position="11"/>
        <end position="19"/>
    </location>
    <ligand>
        <name>ATP</name>
        <dbReference type="ChEBI" id="CHEBI:30616"/>
    </ligand>
</feature>
<feature type="binding site" evidence="1">
    <location>
        <position position="37"/>
    </location>
    <ligand>
        <name>ATP</name>
        <dbReference type="ChEBI" id="CHEBI:30616"/>
    </ligand>
</feature>
<feature type="binding site" evidence="1">
    <location>
        <position position="88"/>
    </location>
    <ligand>
        <name>L-citrulline</name>
        <dbReference type="ChEBI" id="CHEBI:57743"/>
    </ligand>
</feature>
<feature type="binding site" evidence="1">
    <location>
        <begin position="116"/>
        <end position="124"/>
    </location>
    <ligand>
        <name>ATP</name>
        <dbReference type="ChEBI" id="CHEBI:30616"/>
    </ligand>
</feature>
<feature type="binding site" evidence="1">
    <location>
        <position position="120"/>
    </location>
    <ligand>
        <name>L-aspartate</name>
        <dbReference type="ChEBI" id="CHEBI:29991"/>
    </ligand>
</feature>
<feature type="binding site" evidence="1">
    <location>
        <position position="124"/>
    </location>
    <ligand>
        <name>L-aspartate</name>
        <dbReference type="ChEBI" id="CHEBI:29991"/>
    </ligand>
</feature>
<feature type="binding site" evidence="1">
    <location>
        <position position="124"/>
    </location>
    <ligand>
        <name>L-citrulline</name>
        <dbReference type="ChEBI" id="CHEBI:57743"/>
    </ligand>
</feature>
<feature type="binding site" evidence="1">
    <location>
        <position position="125"/>
    </location>
    <ligand>
        <name>L-aspartate</name>
        <dbReference type="ChEBI" id="CHEBI:29991"/>
    </ligand>
</feature>
<feature type="binding site" evidence="1">
    <location>
        <position position="128"/>
    </location>
    <ligand>
        <name>L-citrulline</name>
        <dbReference type="ChEBI" id="CHEBI:57743"/>
    </ligand>
</feature>
<feature type="binding site" evidence="1">
    <location>
        <position position="181"/>
    </location>
    <ligand>
        <name>L-citrulline</name>
        <dbReference type="ChEBI" id="CHEBI:57743"/>
    </ligand>
</feature>
<feature type="binding site" evidence="1">
    <location>
        <position position="190"/>
    </location>
    <ligand>
        <name>L-citrulline</name>
        <dbReference type="ChEBI" id="CHEBI:57743"/>
    </ligand>
</feature>
<feature type="binding site" evidence="1">
    <location>
        <position position="271"/>
    </location>
    <ligand>
        <name>L-citrulline</name>
        <dbReference type="ChEBI" id="CHEBI:57743"/>
    </ligand>
</feature>
<feature type="binding site" evidence="1">
    <location>
        <position position="283"/>
    </location>
    <ligand>
        <name>L-citrulline</name>
        <dbReference type="ChEBI" id="CHEBI:57743"/>
    </ligand>
</feature>
<feature type="modified residue" description="Phosphotyrosine" evidence="2">
    <location>
        <position position="88"/>
    </location>
</feature>
<feature type="modified residue" description="Phosphotyrosine" evidence="1">
    <location>
        <position position="114"/>
    </location>
</feature>
<feature type="modified residue" description="Phosphoserine" evidence="1">
    <location>
        <position position="181"/>
    </location>
</feature>
<name>ASSY_CHICK</name>
<proteinExistence type="evidence at transcript level"/>
<gene>
    <name evidence="1" type="primary">ASS1</name>
    <name evidence="4" type="ORF">RCJMB04_21j5</name>
</gene>
<organism>
    <name type="scientific">Gallus gallus</name>
    <name type="common">Chicken</name>
    <dbReference type="NCBI Taxonomy" id="9031"/>
    <lineage>
        <taxon>Eukaryota</taxon>
        <taxon>Metazoa</taxon>
        <taxon>Chordata</taxon>
        <taxon>Craniata</taxon>
        <taxon>Vertebrata</taxon>
        <taxon>Euteleostomi</taxon>
        <taxon>Archelosauria</taxon>
        <taxon>Archosauria</taxon>
        <taxon>Dinosauria</taxon>
        <taxon>Saurischia</taxon>
        <taxon>Theropoda</taxon>
        <taxon>Coelurosauria</taxon>
        <taxon>Aves</taxon>
        <taxon>Neognathae</taxon>
        <taxon>Galloanserae</taxon>
        <taxon>Galliformes</taxon>
        <taxon>Phasianidae</taxon>
        <taxon>Phasianinae</taxon>
        <taxon>Gallus</taxon>
    </lineage>
</organism>
<accession>Q5ZJ23</accession>
<protein>
    <recommendedName>
        <fullName evidence="3">Argininosuccinate synthase</fullName>
        <ecNumber evidence="1">6.3.4.5</ecNumber>
    </recommendedName>
    <alternativeName>
        <fullName>Citrulline--aspartate ligase</fullName>
    </alternativeName>
</protein>
<sequence>MAEPRDTVVLAYSGGLDTSCILVWLKEQGYTVIAFLANIGQTEDFDAAQKKALALGAKKVYIQDVCREFVEDFIWPAVRANALYEDRYMLGSALARPCIARHLVLIAQEEGARYIAHGATGKGNDQVRFELGCYALCPSIKVIAPWRMPEFYQRFPGRRELMEYAQKHGIPVPVTPKAPWSMDENLMHISYEAGILENPKNRAPLDLYTKTCNPTTSPDVPDELEIEFEKGVPVKVTNTRNGVTHRSALELFVYLNDIASKHGVGRVDIVENRFVGMKSRGIYETPAGTILYHAHLDIEAFTMDREVRKIKQGLSLKFSELVYNGFWYSPECEFLKHCIARSQQAVAGTVHVSVFKGQVYVLGRESPHSLYNEELVSMDVQGDYEPADATGFININALRLKEYHRLQSKVSTKQDE</sequence>
<dbReference type="EC" id="6.3.4.5" evidence="1"/>
<dbReference type="EMBL" id="AJ720611">
    <property type="protein sequence ID" value="CAG32270.1"/>
    <property type="molecule type" value="mRNA"/>
</dbReference>
<dbReference type="RefSeq" id="NP_001013413.1">
    <property type="nucleotide sequence ID" value="NM_001013395.1"/>
</dbReference>
<dbReference type="SMR" id="Q5ZJ23"/>
<dbReference type="FunCoup" id="Q5ZJ23">
    <property type="interactions" value="1561"/>
</dbReference>
<dbReference type="STRING" id="9031.ENSGALP00000038774"/>
<dbReference type="PaxDb" id="9031-ENSGALP00000038774"/>
<dbReference type="GeneID" id="417185"/>
<dbReference type="KEGG" id="gga:417185"/>
<dbReference type="CTD" id="445"/>
<dbReference type="VEuPathDB" id="HostDB:geneid_417185"/>
<dbReference type="eggNOG" id="KOG1706">
    <property type="taxonomic scope" value="Eukaryota"/>
</dbReference>
<dbReference type="InParanoid" id="Q5ZJ23"/>
<dbReference type="OrthoDB" id="1688907at2759"/>
<dbReference type="PhylomeDB" id="Q5ZJ23"/>
<dbReference type="UniPathway" id="UPA00068">
    <property type="reaction ID" value="UER00113"/>
</dbReference>
<dbReference type="UniPathway" id="UPA00158">
    <property type="reaction ID" value="UER00272"/>
</dbReference>
<dbReference type="PRO" id="PR:Q5ZJ23"/>
<dbReference type="Proteomes" id="UP000000539">
    <property type="component" value="Unassembled WGS sequence"/>
</dbReference>
<dbReference type="GO" id="GO:0005737">
    <property type="term" value="C:cytoplasm"/>
    <property type="evidence" value="ECO:0000318"/>
    <property type="project" value="GO_Central"/>
</dbReference>
<dbReference type="GO" id="GO:0005829">
    <property type="term" value="C:cytosol"/>
    <property type="evidence" value="ECO:0007669"/>
    <property type="project" value="UniProtKB-SubCell"/>
</dbReference>
<dbReference type="GO" id="GO:0004055">
    <property type="term" value="F:argininosuccinate synthase activity"/>
    <property type="evidence" value="ECO:0000314"/>
    <property type="project" value="AgBase"/>
</dbReference>
<dbReference type="GO" id="GO:0005524">
    <property type="term" value="F:ATP binding"/>
    <property type="evidence" value="ECO:0007669"/>
    <property type="project" value="UniProtKB-KW"/>
</dbReference>
<dbReference type="GO" id="GO:0000053">
    <property type="term" value="P:argininosuccinate metabolic process"/>
    <property type="evidence" value="ECO:0000318"/>
    <property type="project" value="GO_Central"/>
</dbReference>
<dbReference type="GO" id="GO:0006526">
    <property type="term" value="P:L-arginine biosynthetic process"/>
    <property type="evidence" value="ECO:0000250"/>
    <property type="project" value="UniProtKB"/>
</dbReference>
<dbReference type="GO" id="GO:0000050">
    <property type="term" value="P:urea cycle"/>
    <property type="evidence" value="ECO:0000250"/>
    <property type="project" value="UniProtKB"/>
</dbReference>
<dbReference type="CDD" id="cd01999">
    <property type="entry name" value="ASS"/>
    <property type="match status" value="1"/>
</dbReference>
<dbReference type="FunFam" id="3.40.50.620:FF:000019">
    <property type="entry name" value="Argininosuccinate synthase"/>
    <property type="match status" value="1"/>
</dbReference>
<dbReference type="FunFam" id="1.20.5.470:FF:000003">
    <property type="entry name" value="Argininosuccinate synthase 1"/>
    <property type="match status" value="1"/>
</dbReference>
<dbReference type="FunFam" id="3.90.1260.10:FF:000005">
    <property type="entry name" value="Argininosuccinate synthase 1"/>
    <property type="match status" value="1"/>
</dbReference>
<dbReference type="Gene3D" id="3.90.1260.10">
    <property type="entry name" value="Argininosuccinate synthetase, chain A, domain 2"/>
    <property type="match status" value="1"/>
</dbReference>
<dbReference type="Gene3D" id="3.40.50.620">
    <property type="entry name" value="HUPs"/>
    <property type="match status" value="1"/>
</dbReference>
<dbReference type="Gene3D" id="1.20.5.470">
    <property type="entry name" value="Single helix bin"/>
    <property type="match status" value="1"/>
</dbReference>
<dbReference type="HAMAP" id="MF_00005">
    <property type="entry name" value="Arg_succ_synth_type1"/>
    <property type="match status" value="1"/>
</dbReference>
<dbReference type="InterPro" id="IPR048268">
    <property type="entry name" value="Arginosuc_syn_C"/>
</dbReference>
<dbReference type="InterPro" id="IPR048267">
    <property type="entry name" value="Arginosuc_syn_N"/>
</dbReference>
<dbReference type="InterPro" id="IPR001518">
    <property type="entry name" value="Arginosuc_synth"/>
</dbReference>
<dbReference type="InterPro" id="IPR018223">
    <property type="entry name" value="Arginosuc_synth_CS"/>
</dbReference>
<dbReference type="InterPro" id="IPR023434">
    <property type="entry name" value="Arginosuc_synth_type_1_subfam"/>
</dbReference>
<dbReference type="InterPro" id="IPR024074">
    <property type="entry name" value="AS_cat/multimer_dom_body"/>
</dbReference>
<dbReference type="InterPro" id="IPR014729">
    <property type="entry name" value="Rossmann-like_a/b/a_fold"/>
</dbReference>
<dbReference type="NCBIfam" id="TIGR00032">
    <property type="entry name" value="argG"/>
    <property type="match status" value="1"/>
</dbReference>
<dbReference type="NCBIfam" id="NF001770">
    <property type="entry name" value="PRK00509.1"/>
    <property type="match status" value="1"/>
</dbReference>
<dbReference type="PANTHER" id="PTHR11587">
    <property type="entry name" value="ARGININOSUCCINATE SYNTHASE"/>
    <property type="match status" value="1"/>
</dbReference>
<dbReference type="PANTHER" id="PTHR11587:SF2">
    <property type="entry name" value="ARGININOSUCCINATE SYNTHASE"/>
    <property type="match status" value="1"/>
</dbReference>
<dbReference type="Pfam" id="PF20979">
    <property type="entry name" value="Arginosuc_syn_C"/>
    <property type="match status" value="1"/>
</dbReference>
<dbReference type="Pfam" id="PF00764">
    <property type="entry name" value="Arginosuc_synth"/>
    <property type="match status" value="1"/>
</dbReference>
<dbReference type="SUPFAM" id="SSF52402">
    <property type="entry name" value="Adenine nucleotide alpha hydrolases-like"/>
    <property type="match status" value="1"/>
</dbReference>
<dbReference type="SUPFAM" id="SSF69864">
    <property type="entry name" value="Argininosuccinate synthetase, C-terminal domain"/>
    <property type="match status" value="1"/>
</dbReference>
<dbReference type="PROSITE" id="PS00564">
    <property type="entry name" value="ARGININOSUCCIN_SYN_1"/>
    <property type="match status" value="1"/>
</dbReference>
<dbReference type="PROSITE" id="PS00565">
    <property type="entry name" value="ARGININOSUCCIN_SYN_2"/>
    <property type="match status" value="1"/>
</dbReference>
<keyword id="KW-0028">Amino-acid biosynthesis</keyword>
<keyword id="KW-0055">Arginine biosynthesis</keyword>
<keyword id="KW-0067">ATP-binding</keyword>
<keyword id="KW-0963">Cytoplasm</keyword>
<keyword id="KW-0436">Ligase</keyword>
<keyword id="KW-0547">Nucleotide-binding</keyword>
<keyword id="KW-0597">Phosphoprotein</keyword>
<keyword id="KW-1185">Reference proteome</keyword>
<keyword id="KW-0835">Urea cycle</keyword>